<proteinExistence type="evidence at transcript level"/>
<accession>O23730</accession>
<name>CHS4_BROFI</name>
<dbReference type="EC" id="2.3.1.74"/>
<dbReference type="EMBL" id="AF007098">
    <property type="protein sequence ID" value="AAB62875.1"/>
    <property type="molecule type" value="mRNA"/>
</dbReference>
<dbReference type="SMR" id="O23730"/>
<dbReference type="UniPathway" id="UPA00154"/>
<dbReference type="GO" id="GO:0016210">
    <property type="term" value="F:naringenin-chalcone synthase activity"/>
    <property type="evidence" value="ECO:0007669"/>
    <property type="project" value="UniProtKB-EC"/>
</dbReference>
<dbReference type="GO" id="GO:0009813">
    <property type="term" value="P:flavonoid biosynthetic process"/>
    <property type="evidence" value="ECO:0007669"/>
    <property type="project" value="UniProtKB-UniPathway"/>
</dbReference>
<dbReference type="GO" id="GO:0030639">
    <property type="term" value="P:polyketide biosynthetic process"/>
    <property type="evidence" value="ECO:0007669"/>
    <property type="project" value="TreeGrafter"/>
</dbReference>
<dbReference type="CDD" id="cd00831">
    <property type="entry name" value="CHS_like"/>
    <property type="match status" value="1"/>
</dbReference>
<dbReference type="FunFam" id="3.40.47.10:FF:000014">
    <property type="entry name" value="Chalcone synthase 1"/>
    <property type="match status" value="1"/>
</dbReference>
<dbReference type="FunFam" id="3.40.47.10:FF:000025">
    <property type="entry name" value="Chalcone synthase 2"/>
    <property type="match status" value="1"/>
</dbReference>
<dbReference type="Gene3D" id="3.40.47.10">
    <property type="match status" value="2"/>
</dbReference>
<dbReference type="InterPro" id="IPR012328">
    <property type="entry name" value="Chalcone/stilbene_synt_C"/>
</dbReference>
<dbReference type="InterPro" id="IPR001099">
    <property type="entry name" value="Chalcone/stilbene_synt_N"/>
</dbReference>
<dbReference type="InterPro" id="IPR018088">
    <property type="entry name" value="Chalcone/stilbene_synthase_AS"/>
</dbReference>
<dbReference type="InterPro" id="IPR011141">
    <property type="entry name" value="Polyketide_synthase_type-III"/>
</dbReference>
<dbReference type="InterPro" id="IPR016039">
    <property type="entry name" value="Thiolase-like"/>
</dbReference>
<dbReference type="PANTHER" id="PTHR11877:SF14">
    <property type="entry name" value="CHALCONE SYNTHASE"/>
    <property type="match status" value="1"/>
</dbReference>
<dbReference type="PANTHER" id="PTHR11877">
    <property type="entry name" value="HYDROXYMETHYLGLUTARYL-COA SYNTHASE"/>
    <property type="match status" value="1"/>
</dbReference>
<dbReference type="Pfam" id="PF02797">
    <property type="entry name" value="Chal_sti_synt_C"/>
    <property type="match status" value="1"/>
</dbReference>
<dbReference type="Pfam" id="PF00195">
    <property type="entry name" value="Chal_sti_synt_N"/>
    <property type="match status" value="1"/>
</dbReference>
<dbReference type="PIRSF" id="PIRSF000451">
    <property type="entry name" value="PKS_III"/>
    <property type="match status" value="1"/>
</dbReference>
<dbReference type="SUPFAM" id="SSF53901">
    <property type="entry name" value="Thiolase-like"/>
    <property type="match status" value="2"/>
</dbReference>
<dbReference type="PROSITE" id="PS00441">
    <property type="entry name" value="CHALCONE_SYNTH"/>
    <property type="match status" value="1"/>
</dbReference>
<sequence length="394" mass="42915">MAPAMEEIRQAQRAEGPAAVLAIGTSTPPNALYQADYPDYYFRITKSEHLTELKEKFKRMCDKSMIKKRYMYLTEEILKENPNICAFMAPSLDARQDIVVTEVPKLAKEAAVRAIKEWGHPKSRITHLIFCTTSGIDMPGADYQLTRLLGLRPSVNRFMLYQQGCFAGGTVLRLAKDLAENNAGARVLVVCSEITAVTFRGPSESHLDSLVGQALFGDGAAAIIVGSDPDSATERPLFQLVSASQTILPESEGAIDGHLREIGLTFHLLKDVPGLISKNIQKCLLDAFKPLGVHDWNSIFWIAHPGGPAILDQVEIKLGLKAEKLAASRSVLAEYGNMSSACVLFILDEMRRRSAEAGQATTGEGLEWGVLFGFGPGLTVETIVLRSVPIAGAE</sequence>
<reference key="1">
    <citation type="submission" date="1997-06" db="EMBL/GenBank/DDBJ databases">
        <title>Molecular cloning and sequence analysis of chalcone synthase cDNAs of Bromheadia finlaysoniana.</title>
        <authorList>
            <person name="Liew C.F."/>
            <person name="Lim S.H."/>
            <person name="Loh C.S."/>
            <person name="Goh C.J."/>
        </authorList>
    </citation>
    <scope>NUCLEOTIDE SEQUENCE [MRNA]</scope>
    <source>
        <tissue>Flower</tissue>
    </source>
</reference>
<protein>
    <recommendedName>
        <fullName>Chalcone synthase 4</fullName>
        <ecNumber>2.3.1.74</ecNumber>
    </recommendedName>
    <alternativeName>
        <fullName>Naringenin-chalcone synthase 4</fullName>
    </alternativeName>
</protein>
<keyword id="KW-0012">Acyltransferase</keyword>
<keyword id="KW-0284">Flavonoid biosynthesis</keyword>
<keyword id="KW-0808">Transferase</keyword>
<evidence type="ECO:0000255" key="1">
    <source>
        <dbReference type="PROSITE-ProRule" id="PRU10023"/>
    </source>
</evidence>
<evidence type="ECO:0000305" key="2"/>
<comment type="function">
    <text>The primary product of this enzyme is 4,2',4',6'-tetrahydroxychalcone (also termed naringenin-chalcone or chalcone) which can under specific conditions spontaneously isomerize into naringenin.</text>
</comment>
<comment type="catalytic activity">
    <reaction evidence="1">
        <text>(E)-4-coumaroyl-CoA + 3 malonyl-CoA + 3 H(+) = 2',4,4',6'-tetrahydroxychalcone + 3 CO2 + 4 CoA</text>
        <dbReference type="Rhea" id="RHEA:11128"/>
        <dbReference type="ChEBI" id="CHEBI:15378"/>
        <dbReference type="ChEBI" id="CHEBI:15413"/>
        <dbReference type="ChEBI" id="CHEBI:16526"/>
        <dbReference type="ChEBI" id="CHEBI:57287"/>
        <dbReference type="ChEBI" id="CHEBI:57384"/>
        <dbReference type="ChEBI" id="CHEBI:85008"/>
        <dbReference type="EC" id="2.3.1.74"/>
    </reaction>
</comment>
<comment type="pathway">
    <text>Secondary metabolite biosynthesis; flavonoid biosynthesis.</text>
</comment>
<comment type="similarity">
    <text evidence="2">Belongs to the thiolase-like superfamily. Chalcone/stilbene synthases family.</text>
</comment>
<feature type="chain" id="PRO_0000215957" description="Chalcone synthase 4">
    <location>
        <begin position="1"/>
        <end position="394"/>
    </location>
</feature>
<feature type="active site" evidence="1">
    <location>
        <position position="165"/>
    </location>
</feature>
<gene>
    <name type="primary">CHS4</name>
</gene>
<organism>
    <name type="scientific">Bromheadia finlaysoniana</name>
    <name type="common">Orchid</name>
    <dbReference type="NCBI Taxonomy" id="41205"/>
    <lineage>
        <taxon>Eukaryota</taxon>
        <taxon>Viridiplantae</taxon>
        <taxon>Streptophyta</taxon>
        <taxon>Embryophyta</taxon>
        <taxon>Tracheophyta</taxon>
        <taxon>Spermatophyta</taxon>
        <taxon>Magnoliopsida</taxon>
        <taxon>Liliopsida</taxon>
        <taxon>Asparagales</taxon>
        <taxon>Orchidaceae</taxon>
        <taxon>Epidendroideae</taxon>
        <taxon>Vandeae</taxon>
        <taxon>Adrorhizinae</taxon>
        <taxon>Bromheadia</taxon>
    </lineage>
</organism>